<protein>
    <recommendedName>
        <fullName evidence="1">Protein RecA</fullName>
    </recommendedName>
    <alternativeName>
        <fullName evidence="1">Recombinase A</fullName>
    </alternativeName>
</protein>
<dbReference type="EMBL" id="AJ278527">
    <property type="protein sequence ID" value="CAC21189.1"/>
    <property type="molecule type" value="Genomic_DNA"/>
</dbReference>
<dbReference type="SMR" id="Q9EVV7"/>
<dbReference type="eggNOG" id="COG0468">
    <property type="taxonomic scope" value="Bacteria"/>
</dbReference>
<dbReference type="GO" id="GO:0005829">
    <property type="term" value="C:cytosol"/>
    <property type="evidence" value="ECO:0007669"/>
    <property type="project" value="TreeGrafter"/>
</dbReference>
<dbReference type="GO" id="GO:0005524">
    <property type="term" value="F:ATP binding"/>
    <property type="evidence" value="ECO:0007669"/>
    <property type="project" value="UniProtKB-UniRule"/>
</dbReference>
<dbReference type="GO" id="GO:0016887">
    <property type="term" value="F:ATP hydrolysis activity"/>
    <property type="evidence" value="ECO:0007669"/>
    <property type="project" value="InterPro"/>
</dbReference>
<dbReference type="GO" id="GO:0140664">
    <property type="term" value="F:ATP-dependent DNA damage sensor activity"/>
    <property type="evidence" value="ECO:0007669"/>
    <property type="project" value="InterPro"/>
</dbReference>
<dbReference type="GO" id="GO:0003684">
    <property type="term" value="F:damaged DNA binding"/>
    <property type="evidence" value="ECO:0007669"/>
    <property type="project" value="UniProtKB-UniRule"/>
</dbReference>
<dbReference type="GO" id="GO:0003697">
    <property type="term" value="F:single-stranded DNA binding"/>
    <property type="evidence" value="ECO:0007669"/>
    <property type="project" value="UniProtKB-UniRule"/>
</dbReference>
<dbReference type="GO" id="GO:0006310">
    <property type="term" value="P:DNA recombination"/>
    <property type="evidence" value="ECO:0007669"/>
    <property type="project" value="UniProtKB-UniRule"/>
</dbReference>
<dbReference type="GO" id="GO:0006281">
    <property type="term" value="P:DNA repair"/>
    <property type="evidence" value="ECO:0007669"/>
    <property type="project" value="UniProtKB-UniRule"/>
</dbReference>
<dbReference type="GO" id="GO:0009432">
    <property type="term" value="P:SOS response"/>
    <property type="evidence" value="ECO:0007669"/>
    <property type="project" value="UniProtKB-UniRule"/>
</dbReference>
<dbReference type="CDD" id="cd00983">
    <property type="entry name" value="RecA"/>
    <property type="match status" value="1"/>
</dbReference>
<dbReference type="FunFam" id="3.40.50.300:FF:000087">
    <property type="entry name" value="Recombinase RecA"/>
    <property type="match status" value="1"/>
</dbReference>
<dbReference type="Gene3D" id="3.40.50.300">
    <property type="entry name" value="P-loop containing nucleotide triphosphate hydrolases"/>
    <property type="match status" value="1"/>
</dbReference>
<dbReference type="HAMAP" id="MF_00268">
    <property type="entry name" value="RecA"/>
    <property type="match status" value="1"/>
</dbReference>
<dbReference type="InterPro" id="IPR003593">
    <property type="entry name" value="AAA+_ATPase"/>
</dbReference>
<dbReference type="InterPro" id="IPR013765">
    <property type="entry name" value="DNA_recomb/repair_RecA"/>
</dbReference>
<dbReference type="InterPro" id="IPR027417">
    <property type="entry name" value="P-loop_NTPase"/>
</dbReference>
<dbReference type="InterPro" id="IPR049261">
    <property type="entry name" value="RecA-like_C"/>
</dbReference>
<dbReference type="InterPro" id="IPR049428">
    <property type="entry name" value="RecA-like_N"/>
</dbReference>
<dbReference type="InterPro" id="IPR020588">
    <property type="entry name" value="RecA_ATP-bd"/>
</dbReference>
<dbReference type="InterPro" id="IPR023400">
    <property type="entry name" value="RecA_C_sf"/>
</dbReference>
<dbReference type="InterPro" id="IPR020587">
    <property type="entry name" value="RecA_monomer-monomer_interface"/>
</dbReference>
<dbReference type="NCBIfam" id="TIGR02012">
    <property type="entry name" value="tigrfam_recA"/>
    <property type="match status" value="1"/>
</dbReference>
<dbReference type="PANTHER" id="PTHR45900:SF1">
    <property type="entry name" value="MITOCHONDRIAL DNA REPAIR PROTEIN RECA HOMOLOG-RELATED"/>
    <property type="match status" value="1"/>
</dbReference>
<dbReference type="PANTHER" id="PTHR45900">
    <property type="entry name" value="RECA"/>
    <property type="match status" value="1"/>
</dbReference>
<dbReference type="Pfam" id="PF00154">
    <property type="entry name" value="RecA"/>
    <property type="match status" value="1"/>
</dbReference>
<dbReference type="Pfam" id="PF21096">
    <property type="entry name" value="RecA_C"/>
    <property type="match status" value="1"/>
</dbReference>
<dbReference type="PRINTS" id="PR00142">
    <property type="entry name" value="RECA"/>
</dbReference>
<dbReference type="SMART" id="SM00382">
    <property type="entry name" value="AAA"/>
    <property type="match status" value="1"/>
</dbReference>
<dbReference type="SUPFAM" id="SSF52540">
    <property type="entry name" value="P-loop containing nucleoside triphosphate hydrolases"/>
    <property type="match status" value="1"/>
</dbReference>
<dbReference type="SUPFAM" id="SSF54752">
    <property type="entry name" value="RecA protein, C-terminal domain"/>
    <property type="match status" value="1"/>
</dbReference>
<dbReference type="PROSITE" id="PS50162">
    <property type="entry name" value="RECA_2"/>
    <property type="match status" value="1"/>
</dbReference>
<dbReference type="PROSITE" id="PS50163">
    <property type="entry name" value="RECA_3"/>
    <property type="match status" value="1"/>
</dbReference>
<sequence length="379" mass="40908">MAKKTKKTEEITKKFGDERWKALDDALKNIGKDFGKGAVMRLGERAEEKVQVMSSGSLALDIALGAGGYPKGRIIEIYGPESSGKTTVALHAVAQTQKEGGIAAFIDAEHALDPAYAAALGVNIDELLLSQPDSGEQGLEIACKLIDSGAVDLVVVDSVAALVPRAEIDGDIGDSHVGLQARMMSQAMRKLSASINKTKTIAIFINQLREKVGIMFGNPETTPGGRALKFYAYVALDVRGNTQIKGTGDKKDQNVGKETKIKVVKNKVAPPFKEAFVEIMYGEGISQTGELVKIASDIGIIQKAGAWFSYNGEKIGQGSENAKKYLADHPEIFAEIDHKVRVHYGLIELDEDDVVEDTQVEDTSDELILDLDSTIEIEE</sequence>
<feature type="chain" id="PRO_0000122868" description="Protein RecA">
    <location>
        <begin position="1"/>
        <end position="379"/>
    </location>
</feature>
<feature type="binding site" evidence="1">
    <location>
        <begin position="79"/>
        <end position="86"/>
    </location>
    <ligand>
        <name>ATP</name>
        <dbReference type="ChEBI" id="CHEBI:30616"/>
    </ligand>
</feature>
<organism>
    <name type="scientific">Streptococcus thermophilus</name>
    <dbReference type="NCBI Taxonomy" id="1308"/>
    <lineage>
        <taxon>Bacteria</taxon>
        <taxon>Bacillati</taxon>
        <taxon>Bacillota</taxon>
        <taxon>Bacilli</taxon>
        <taxon>Lactobacillales</taxon>
        <taxon>Streptococcaceae</taxon>
        <taxon>Streptococcus</taxon>
    </lineage>
</organism>
<reference key="1">
    <citation type="submission" date="2000-06" db="EMBL/GenBank/DDBJ databases">
        <title>Structural and functional characterization of the recA gene of Streptococcus thermophilus.</title>
        <authorList>
            <person name="Naclerio G."/>
            <person name="Giliberti G."/>
            <person name="Ricca E."/>
            <person name="De Felice M."/>
        </authorList>
    </citation>
    <scope>NUCLEOTIDE SEQUENCE [GENOMIC DNA]</scope>
    <source>
        <strain>Sfi39</strain>
    </source>
</reference>
<gene>
    <name evidence="1" type="primary">recA</name>
</gene>
<proteinExistence type="inferred from homology"/>
<keyword id="KW-0067">ATP-binding</keyword>
<keyword id="KW-0963">Cytoplasm</keyword>
<keyword id="KW-0227">DNA damage</keyword>
<keyword id="KW-0233">DNA recombination</keyword>
<keyword id="KW-0234">DNA repair</keyword>
<keyword id="KW-0238">DNA-binding</keyword>
<keyword id="KW-0547">Nucleotide-binding</keyword>
<keyword id="KW-0742">SOS response</keyword>
<accession>Q9EVV7</accession>
<comment type="function">
    <text evidence="1">Can catalyze the hydrolysis of ATP in the presence of single-stranded DNA, the ATP-dependent uptake of single-stranded DNA by duplex DNA, and the ATP-dependent hybridization of homologous single-stranded DNAs. It interacts with LexA causing its activation and leading to its autocatalytic cleavage.</text>
</comment>
<comment type="subcellular location">
    <subcellularLocation>
        <location evidence="1">Cytoplasm</location>
    </subcellularLocation>
</comment>
<comment type="similarity">
    <text evidence="1">Belongs to the RecA family.</text>
</comment>
<name>RECA_STRTR</name>
<evidence type="ECO:0000255" key="1">
    <source>
        <dbReference type="HAMAP-Rule" id="MF_00268"/>
    </source>
</evidence>